<organism>
    <name type="scientific">Mycobacterium tuberculosis (strain ATCC 25618 / H37Rv)</name>
    <dbReference type="NCBI Taxonomy" id="83332"/>
    <lineage>
        <taxon>Bacteria</taxon>
        <taxon>Bacillati</taxon>
        <taxon>Actinomycetota</taxon>
        <taxon>Actinomycetes</taxon>
        <taxon>Mycobacteriales</taxon>
        <taxon>Mycobacteriaceae</taxon>
        <taxon>Mycobacterium</taxon>
        <taxon>Mycobacterium tuberculosis complex</taxon>
    </lineage>
</organism>
<sequence>MTTTRTERNFAGIGDVRIVYDVWTPDTAPQAVVVLAHGLGEHARRYDHVAQRLGAAGLVTYALDHRGHGRSGGKRVLVRDISEYTADFDTLVGIATREYPGCKRIVLGHSMGGGIVFAYGVERPDNYDLMVLSAPAVAAQDLVSPVVAVAAKLLGVVVPGLPVQELDFTAISRDPEVVQAYNTDPLVHHGRVPAGIGRALLQVGETMPRRAPALTAPLLVLHGTDDRLIPIEGSRRLVECVGSADVQLKEYPGLYHEVFNEPERNQVLDDVVAWLTERL</sequence>
<evidence type="ECO:0000269" key="1">
    <source>
    </source>
</evidence>
<evidence type="ECO:0000269" key="2">
    <source>
    </source>
</evidence>
<evidence type="ECO:0000269" key="3">
    <source>
    </source>
</evidence>
<evidence type="ECO:0000269" key="4">
    <source>
    </source>
</evidence>
<evidence type="ECO:0000269" key="5">
    <source>
    </source>
</evidence>
<evidence type="ECO:0000303" key="6">
    <source>
    </source>
</evidence>
<evidence type="ECO:0000305" key="7"/>
<evidence type="ECO:0000305" key="8">
    <source>
    </source>
</evidence>
<evidence type="ECO:0000305" key="9">
    <source>
    </source>
</evidence>
<evidence type="ECO:0000305" key="10">
    <source>
    </source>
</evidence>
<evidence type="ECO:0007744" key="11">
    <source>
        <dbReference type="PDB" id="6EIC"/>
    </source>
</evidence>
<evidence type="ECO:0007829" key="12">
    <source>
        <dbReference type="PDB" id="6EIC"/>
    </source>
</evidence>
<accession>O07427</accession>
<accession>F2GLY1</accession>
<accession>I6Y308</accession>
<accession>L0T2S2</accession>
<keyword id="KW-0002">3D-structure</keyword>
<keyword id="KW-0134">Cell wall</keyword>
<keyword id="KW-0378">Hydrolase</keyword>
<keyword id="KW-0442">Lipid degradation</keyword>
<keyword id="KW-0443">Lipid metabolism</keyword>
<keyword id="KW-0582">Pharmaceutical</keyword>
<keyword id="KW-1185">Reference proteome</keyword>
<keyword id="KW-0964">Secreted</keyword>
<keyword id="KW-0843">Virulence</keyword>
<gene>
    <name type="ordered locus">Rv0183</name>
</gene>
<feature type="chain" id="PRO_0000438237" description="Monoacylglycerol lipase">
    <location>
        <begin position="1"/>
        <end position="279"/>
    </location>
</feature>
<feature type="active site" description="Nucleophile" evidence="8 10">
    <location>
        <position position="110"/>
    </location>
</feature>
<feature type="active site" description="Charge relay system" evidence="8 10">
    <location>
        <position position="226"/>
    </location>
</feature>
<feature type="active site" description="Charge relay system" evidence="8 10">
    <location>
        <position position="256"/>
    </location>
</feature>
<feature type="mutagenesis site" description="Loss of lipase activity." evidence="1">
    <original>S</original>
    <variation>A</variation>
    <location>
        <position position="110"/>
    </location>
</feature>
<feature type="mutagenesis site" description="Loss of lipase activity." evidence="1">
    <original>D</original>
    <variation>A</variation>
    <location>
        <position position="226"/>
    </location>
</feature>
<feature type="mutagenesis site" description="Loss of lipase activity." evidence="1">
    <original>H</original>
    <variation>A</variation>
    <location>
        <position position="256"/>
    </location>
</feature>
<feature type="strand" evidence="12">
    <location>
        <begin position="3"/>
        <end position="11"/>
    </location>
</feature>
<feature type="helix" evidence="12">
    <location>
        <begin position="13"/>
        <end position="15"/>
    </location>
</feature>
<feature type="strand" evidence="12">
    <location>
        <begin position="17"/>
        <end position="27"/>
    </location>
</feature>
<feature type="strand" evidence="12">
    <location>
        <begin position="30"/>
        <end position="36"/>
    </location>
</feature>
<feature type="helix" evidence="12">
    <location>
        <begin position="43"/>
        <end position="46"/>
    </location>
</feature>
<feature type="helix" evidence="12">
    <location>
        <begin position="47"/>
        <end position="55"/>
    </location>
</feature>
<feature type="strand" evidence="12">
    <location>
        <begin position="58"/>
        <end position="63"/>
    </location>
</feature>
<feature type="helix" evidence="12">
    <location>
        <begin position="81"/>
        <end position="98"/>
    </location>
</feature>
<feature type="strand" evidence="12">
    <location>
        <begin position="102"/>
        <end position="109"/>
    </location>
</feature>
<feature type="helix" evidence="12">
    <location>
        <begin position="111"/>
        <end position="122"/>
    </location>
</feature>
<feature type="strand" evidence="12">
    <location>
        <begin position="128"/>
        <end position="134"/>
    </location>
</feature>
<feature type="turn" evidence="12">
    <location>
        <begin position="140"/>
        <end position="142"/>
    </location>
</feature>
<feature type="helix" evidence="12">
    <location>
        <begin position="145"/>
        <end position="157"/>
    </location>
</feature>
<feature type="strand" evidence="12">
    <location>
        <begin position="161"/>
        <end position="164"/>
    </location>
</feature>
<feature type="helix" evidence="12">
    <location>
        <begin position="168"/>
        <end position="170"/>
    </location>
</feature>
<feature type="helix" evidence="12">
    <location>
        <begin position="175"/>
        <end position="182"/>
    </location>
</feature>
<feature type="helix" evidence="12">
    <location>
        <begin position="194"/>
        <end position="210"/>
    </location>
</feature>
<feature type="helix" evidence="12">
    <location>
        <begin position="211"/>
        <end position="213"/>
    </location>
</feature>
<feature type="strand" evidence="12">
    <location>
        <begin position="218"/>
        <end position="223"/>
    </location>
</feature>
<feature type="strand" evidence="12">
    <location>
        <begin position="227"/>
        <end position="229"/>
    </location>
</feature>
<feature type="helix" evidence="12">
    <location>
        <begin position="231"/>
        <end position="240"/>
    </location>
</feature>
<feature type="strand" evidence="12">
    <location>
        <begin position="244"/>
        <end position="251"/>
    </location>
</feature>
<feature type="turn" evidence="12">
    <location>
        <begin position="258"/>
        <end position="260"/>
    </location>
</feature>
<feature type="helix" evidence="12">
    <location>
        <begin position="264"/>
        <end position="276"/>
    </location>
</feature>
<protein>
    <recommendedName>
        <fullName evidence="6">Monoacylglycerol lipase</fullName>
        <shortName evidence="6">MGL</shortName>
        <ecNumber evidence="1">3.1.1.23</ecNumber>
    </recommendedName>
</protein>
<reference key="1">
    <citation type="journal article" date="1998" name="Nature">
        <title>Deciphering the biology of Mycobacterium tuberculosis from the complete genome sequence.</title>
        <authorList>
            <person name="Cole S.T."/>
            <person name="Brosch R."/>
            <person name="Parkhill J."/>
            <person name="Garnier T."/>
            <person name="Churcher C.M."/>
            <person name="Harris D.E."/>
            <person name="Gordon S.V."/>
            <person name="Eiglmeier K."/>
            <person name="Gas S."/>
            <person name="Barry C.E. III"/>
            <person name="Tekaia F."/>
            <person name="Badcock K."/>
            <person name="Basham D."/>
            <person name="Brown D."/>
            <person name="Chillingworth T."/>
            <person name="Connor R."/>
            <person name="Davies R.M."/>
            <person name="Devlin K."/>
            <person name="Feltwell T."/>
            <person name="Gentles S."/>
            <person name="Hamlin N."/>
            <person name="Holroyd S."/>
            <person name="Hornsby T."/>
            <person name="Jagels K."/>
            <person name="Krogh A."/>
            <person name="McLean J."/>
            <person name="Moule S."/>
            <person name="Murphy L.D."/>
            <person name="Oliver S."/>
            <person name="Osborne J."/>
            <person name="Quail M.A."/>
            <person name="Rajandream M.A."/>
            <person name="Rogers J."/>
            <person name="Rutter S."/>
            <person name="Seeger K."/>
            <person name="Skelton S."/>
            <person name="Squares S."/>
            <person name="Squares R."/>
            <person name="Sulston J.E."/>
            <person name="Taylor K."/>
            <person name="Whitehead S."/>
            <person name="Barrell B.G."/>
        </authorList>
    </citation>
    <scope>NUCLEOTIDE SEQUENCE [LARGE SCALE GENOMIC DNA]</scope>
    <source>
        <strain>ATCC 25618 / H37Rv</strain>
    </source>
</reference>
<reference key="2">
    <citation type="journal article" date="2007" name="Biochem. J.">
        <title>Characterization of an exported monoglyceride lipase from Mycobacterium tuberculosis possibly involved in the metabolism of host cell membrane lipids.</title>
        <authorList>
            <person name="Cotes K."/>
            <person name="Dhouib R."/>
            <person name="Douchet I."/>
            <person name="Chahinian H."/>
            <person name="de Caro A."/>
            <person name="Carriere F."/>
            <person name="Canaan S."/>
        </authorList>
    </citation>
    <scope>FUNCTION</scope>
    <scope>CATALYTIC ACTIVITY</scope>
    <scope>BIOPHYSICOCHEMICAL PROPERTIES</scope>
    <scope>MUTAGENESIS OF SER-110; ASP-226 AND HIS-256</scope>
    <scope>ACTIVITY REGULATION</scope>
    <scope>ACTIVE SITE</scope>
    <scope>MASS SPECTROMETRY</scope>
    <scope>SUBCELLULAR LOCATION</scope>
    <scope>SUBSTRATE SPECIFICITY</scope>
    <source>
        <strain>H37Rv</strain>
    </source>
</reference>
<reference key="3">
    <citation type="journal article" date="2010" name="Can. J. Microbiol.">
        <title>Hemolytic phospholipase Rv0183 of Mycobacterium tuberculosis induces inflammatory response and apoptosis in alveolar macrophage RAW264.7 cells.</title>
        <authorList>
            <person name="Xu G."/>
            <person name="Jia H."/>
            <person name="Li Y."/>
            <person name="Liu X."/>
            <person name="Li M."/>
            <person name="Wang Y."/>
        </authorList>
    </citation>
    <scope>FUNCTION IN VIRULENCE</scope>
</reference>
<reference key="4">
    <citation type="journal article" date="2011" name="Mol. Cell. Proteomics">
        <title>Proteogenomic analysis of Mycobacterium tuberculosis by high resolution mass spectrometry.</title>
        <authorList>
            <person name="Kelkar D.S."/>
            <person name="Kumar D."/>
            <person name="Kumar P."/>
            <person name="Balakrishnan L."/>
            <person name="Muthusamy B."/>
            <person name="Yadav A.K."/>
            <person name="Shrivastava P."/>
            <person name="Marimuthu A."/>
            <person name="Anand S."/>
            <person name="Sundaram H."/>
            <person name="Kingsbury R."/>
            <person name="Harsha H.C."/>
            <person name="Nair B."/>
            <person name="Prasad T.S."/>
            <person name="Chauhan D.S."/>
            <person name="Katoch K."/>
            <person name="Katoch V.M."/>
            <person name="Kumar P."/>
            <person name="Chaerkady R."/>
            <person name="Ramachandran S."/>
            <person name="Dash D."/>
            <person name="Pandey A."/>
        </authorList>
    </citation>
    <scope>IDENTIFICATION BY MASS SPECTROMETRY [LARGE SCALE ANALYSIS]</scope>
    <source>
        <strain>ATCC 25618 / H37Rv</strain>
    </source>
</reference>
<reference key="5">
    <citation type="journal article" date="2012" name="Chem. Biol. Drug Des.">
        <title>Potential selective inhibitors against Rv0183 of Mycobacterium tuberculosis targeting host lipid metabolism.</title>
        <authorList>
            <person name="Saravanan P."/>
            <person name="Dubey V.K."/>
            <person name="Patra S."/>
        </authorList>
    </citation>
    <scope>FUNCTION</scope>
    <scope>ACTIVITY REGULATION</scope>
    <scope>IDENTIFICATION AS A DRUG TARGET</scope>
    <source>
        <strain>H37Rv</strain>
    </source>
</reference>
<reference key="6">
    <citation type="journal article" date="2018" name="J. Infect.">
        <title>IL-6 release of Rv0183 antigen-stimulated whole blood is a potential biomarker for active tuberculosis patients.</title>
        <authorList>
            <person name="Liu Y."/>
            <person name="Li X."/>
            <person name="Liu W."/>
            <person name="Liu Y."/>
            <person name="Zhong Z."/>
            <person name="Wang L."/>
            <person name="Ge S."/>
            <person name="Zhang J."/>
            <person name="Xia N."/>
        </authorList>
    </citation>
    <scope>POTENTIAL USE AS A BIOMARKER</scope>
</reference>
<reference evidence="11" key="7">
    <citation type="journal article" date="2018" name="Sci. Rep.">
        <title>The crystal structure of monoacylglycerol lipase from M. tuberculosis reveals the basis for specific inhibition.</title>
        <authorList>
            <person name="Aschauer P."/>
            <person name="Zimmermann R."/>
            <person name="Breinbauer R."/>
            <person name="Pavkov-Keller T."/>
            <person name="Oberer M."/>
        </authorList>
    </citation>
    <scope>X-RAY CRYSTALLOGRAPHY (1.80 ANGSTROMS)</scope>
    <scope>SUBUNIT</scope>
    <scope>ACTIVE SITE</scope>
</reference>
<comment type="function">
    <text evidence="1 8 9">Involved in the hydrolysis of exogenous host lipids during chronic infection (Probable). Catalyzes the hydrolysis of both monoacylglycerols (MAG) and diacylglycerols (DAG), with a preference for MAG. It hydrolyzes 2-MAG, 1-3-MAG and MAG with short, medium and long chain fatty acids such as 1-monobutyroyl-rac-glycerol (MC4), 1-mono-octanoyl-rac-glycerol (MC8), 1-monodecanoyl-rac-glycerol (MC10), 1-monolauroyl-rac-glycerol (MC12), 1-monomyristoyl-rac-glycerol (MC14) and 1-mono-oleyl-rac-glycerol (MC18:1) (PubMed:17784850). Also able to hydrolyze DAG with short (DiC6) and medium (DiC10) fatty acid chains, but not with longest fatty acid chains (PubMed:17784850). Can also hydrolyze vinyl laurate (VC12), vinyl butyrate (VC4) and vinyl propionate (VC3) (PubMed:17784850).</text>
</comment>
<comment type="function">
    <text evidence="2">Induces an inflammatory response and cell apoptosis in the host cells. Increases expression of IL-6, NF-kappaB, TLR-2, TLR-6, TNF-alpha, and MyD88 in mouse alveolar macrophage RAW264.7 cells. Persistent expression induces RAW264.7 cell apoptosis in vitro.</text>
</comment>
<comment type="catalytic activity">
    <reaction evidence="1">
        <text>a 1-acylglycerol + H2O = glycerol + a fatty acid + H(+)</text>
        <dbReference type="Rhea" id="RHEA:34019"/>
        <dbReference type="ChEBI" id="CHEBI:15377"/>
        <dbReference type="ChEBI" id="CHEBI:15378"/>
        <dbReference type="ChEBI" id="CHEBI:17754"/>
        <dbReference type="ChEBI" id="CHEBI:28868"/>
        <dbReference type="ChEBI" id="CHEBI:35759"/>
    </reaction>
</comment>
<comment type="catalytic activity">
    <reaction evidence="1">
        <text>Hydrolyzes glycerol monoesters of long-chain fatty acids.</text>
        <dbReference type="EC" id="3.1.1.23"/>
    </reaction>
</comment>
<comment type="catalytic activity">
    <reaction evidence="1">
        <text>1-butyrylglycerol + H2O = butanoate + glycerol + H(+)</text>
        <dbReference type="Rhea" id="RHEA:44324"/>
        <dbReference type="ChEBI" id="CHEBI:15377"/>
        <dbReference type="ChEBI" id="CHEBI:15378"/>
        <dbReference type="ChEBI" id="CHEBI:17754"/>
        <dbReference type="ChEBI" id="CHEBI:17968"/>
        <dbReference type="ChEBI" id="CHEBI:76503"/>
    </reaction>
    <physiologicalReaction direction="left-to-right" evidence="1">
        <dbReference type="Rhea" id="RHEA:44325"/>
    </physiologicalReaction>
</comment>
<comment type="catalytic activity">
    <reaction evidence="1">
        <text>1-octanoylglycerol + H2O = octanoate + glycerol + H(+)</text>
        <dbReference type="Rhea" id="RHEA:44328"/>
        <dbReference type="ChEBI" id="CHEBI:15377"/>
        <dbReference type="ChEBI" id="CHEBI:15378"/>
        <dbReference type="ChEBI" id="CHEBI:17754"/>
        <dbReference type="ChEBI" id="CHEBI:25646"/>
        <dbReference type="ChEBI" id="CHEBI:85241"/>
    </reaction>
    <physiologicalReaction direction="left-to-right" evidence="1">
        <dbReference type="Rhea" id="RHEA:44329"/>
    </physiologicalReaction>
</comment>
<comment type="catalytic activity">
    <reaction evidence="1">
        <text>1-decanoylglycerol + H2O = decanoate + glycerol + H(+)</text>
        <dbReference type="Rhea" id="RHEA:44320"/>
        <dbReference type="ChEBI" id="CHEBI:15377"/>
        <dbReference type="ChEBI" id="CHEBI:15378"/>
        <dbReference type="ChEBI" id="CHEBI:17754"/>
        <dbReference type="ChEBI" id="CHEBI:27689"/>
        <dbReference type="ChEBI" id="CHEBI:75547"/>
    </reaction>
    <physiologicalReaction direction="left-to-right" evidence="1">
        <dbReference type="Rhea" id="RHEA:44321"/>
    </physiologicalReaction>
</comment>
<comment type="catalytic activity">
    <reaction evidence="1">
        <text>1-dodecanoylglycerol + H2O = dodecanoate + glycerol + H(+)</text>
        <dbReference type="Rhea" id="RHEA:44316"/>
        <dbReference type="ChEBI" id="CHEBI:15377"/>
        <dbReference type="ChEBI" id="CHEBI:15378"/>
        <dbReference type="ChEBI" id="CHEBI:17754"/>
        <dbReference type="ChEBI" id="CHEBI:18262"/>
        <dbReference type="ChEBI" id="CHEBI:75539"/>
    </reaction>
    <physiologicalReaction direction="left-to-right" evidence="1">
        <dbReference type="Rhea" id="RHEA:44317"/>
    </physiologicalReaction>
</comment>
<comment type="catalytic activity">
    <reaction evidence="1">
        <text>1-tetradecanoylglycerol + H2O = tetradecanoate + glycerol + H(+)</text>
        <dbReference type="Rhea" id="RHEA:44312"/>
        <dbReference type="ChEBI" id="CHEBI:15377"/>
        <dbReference type="ChEBI" id="CHEBI:15378"/>
        <dbReference type="ChEBI" id="CHEBI:17754"/>
        <dbReference type="ChEBI" id="CHEBI:30807"/>
        <dbReference type="ChEBI" id="CHEBI:75562"/>
    </reaction>
    <physiologicalReaction direction="left-to-right" evidence="1">
        <dbReference type="Rhea" id="RHEA:44313"/>
    </physiologicalReaction>
</comment>
<comment type="catalytic activity">
    <reaction evidence="1">
        <text>1-(9Z-octadecenoyl)-glycerol + H2O = glycerol + (9Z)-octadecenoate + H(+)</text>
        <dbReference type="Rhea" id="RHEA:38487"/>
        <dbReference type="ChEBI" id="CHEBI:15377"/>
        <dbReference type="ChEBI" id="CHEBI:15378"/>
        <dbReference type="ChEBI" id="CHEBI:17754"/>
        <dbReference type="ChEBI" id="CHEBI:30823"/>
        <dbReference type="ChEBI" id="CHEBI:75342"/>
    </reaction>
    <physiologicalReaction direction="left-to-right" evidence="1">
        <dbReference type="Rhea" id="RHEA:38488"/>
    </physiologicalReaction>
</comment>
<comment type="catalytic activity">
    <reaction evidence="1">
        <text>2-(9Z-octadecenoyl)-glycerol + H2O = glycerol + (9Z)-octadecenoate + H(+)</text>
        <dbReference type="Rhea" id="RHEA:38491"/>
        <dbReference type="ChEBI" id="CHEBI:15377"/>
        <dbReference type="ChEBI" id="CHEBI:15378"/>
        <dbReference type="ChEBI" id="CHEBI:17754"/>
        <dbReference type="ChEBI" id="CHEBI:30823"/>
        <dbReference type="ChEBI" id="CHEBI:73990"/>
    </reaction>
    <physiologicalReaction direction="left-to-right" evidence="1">
        <dbReference type="Rhea" id="RHEA:38492"/>
    </physiologicalReaction>
</comment>
<comment type="activity regulation">
    <text evidence="1 9">Inhibited by the serine esterase inhibitors PMSF (100%), E600 (80%) and THL (22%) (PubMed:17784850). Virtual screening identified a tautomer of ZINC13451138, known inhibitor for HIV-1 integrase, as a potential inhibitor (Probable).</text>
</comment>
<comment type="biophysicochemical properties">
    <phDependence>
        <text evidence="1">Optimum pH is 9. Highly stable from pH 7.5 to 9.0. At lower pH values, the residual activity decreases rapidly to 50% at pH 6.5, and it is completely abolished after 1 hour of incubation at pH levels of 6.0 and below.</text>
    </phDependence>
    <temperatureDependence>
        <text evidence="1">Optimum temperature is 55 degrees Celsius. The activity increases 3-fold in a linear fashion from 25 to 50 degrees Celsius before decreasing slowly at higher temperatures.</text>
    </temperatureDependence>
</comment>
<comment type="subunit">
    <text evidence="5">Monomer.</text>
</comment>
<comment type="subcellular location">
    <subcellularLocation>
        <location evidence="1">Secreted</location>
        <location evidence="1">Cell wall</location>
    </subcellularLocation>
    <subcellularLocation>
        <location evidence="8">Secreted</location>
    </subcellularLocation>
</comment>
<comment type="mass spectrometry"/>
<comment type="pharmaceutical">
    <text evidence="4">The Rv0183 antigen-specific IL-6 response has the potential to be used as an immune-diagnosis test for active TB in clinical practice.</text>
</comment>
<comment type="miscellaneous">
    <text evidence="3 5">Rv0183 represents a suitable and promising drug target.</text>
</comment>
<comment type="similarity">
    <text evidence="7">Belongs to the AB hydrolase superfamily.</text>
</comment>
<name>MGLL_MYCTU</name>
<proteinExistence type="evidence at protein level"/>
<dbReference type="EC" id="3.1.1.23" evidence="1"/>
<dbReference type="EMBL" id="AL123456">
    <property type="protein sequence ID" value="CCP42909.1"/>
    <property type="molecule type" value="Genomic_DNA"/>
</dbReference>
<dbReference type="RefSeq" id="NP_214697.2">
    <property type="nucleotide sequence ID" value="NC_000962.3"/>
</dbReference>
<dbReference type="RefSeq" id="WP_003401112.1">
    <property type="nucleotide sequence ID" value="NZ_NVQJ01000001.1"/>
</dbReference>
<dbReference type="PDB" id="6EIC">
    <property type="method" value="X-ray"/>
    <property type="resolution" value="1.80 A"/>
    <property type="chains" value="A/B/C=1-279"/>
</dbReference>
<dbReference type="PDB" id="7OZM">
    <property type="method" value="X-ray"/>
    <property type="resolution" value="2.15 A"/>
    <property type="chains" value="A=1-279"/>
</dbReference>
<dbReference type="PDB" id="7P0Y">
    <property type="method" value="X-ray"/>
    <property type="resolution" value="2.25 A"/>
    <property type="chains" value="A/B=1-279"/>
</dbReference>
<dbReference type="PDBsum" id="6EIC"/>
<dbReference type="PDBsum" id="7OZM"/>
<dbReference type="PDBsum" id="7P0Y"/>
<dbReference type="SMR" id="O07427"/>
<dbReference type="FunCoup" id="O07427">
    <property type="interactions" value="182"/>
</dbReference>
<dbReference type="STRING" id="83332.Rv0183"/>
<dbReference type="ChEMBL" id="CHEMBL2176861"/>
<dbReference type="SwissLipids" id="SLP:000001038"/>
<dbReference type="ESTHER" id="myctu-rv0183">
    <property type="family name" value="Monoglyceridelipase_lysophospholip"/>
</dbReference>
<dbReference type="PaxDb" id="83332-Rv0183"/>
<dbReference type="DNASU" id="886785"/>
<dbReference type="GeneID" id="886785"/>
<dbReference type="KEGG" id="mtu:Rv0183"/>
<dbReference type="KEGG" id="mtv:RVBD_0183"/>
<dbReference type="PATRIC" id="fig|83332.111.peg.210"/>
<dbReference type="TubercuList" id="Rv0183"/>
<dbReference type="eggNOG" id="COG2267">
    <property type="taxonomic scope" value="Bacteria"/>
</dbReference>
<dbReference type="HOGENOM" id="CLU_026209_7_2_11"/>
<dbReference type="InParanoid" id="O07427"/>
<dbReference type="OrthoDB" id="9806902at2"/>
<dbReference type="PhylomeDB" id="O07427"/>
<dbReference type="BRENDA" id="3.1.1.23">
    <property type="organism ID" value="3445"/>
</dbReference>
<dbReference type="Proteomes" id="UP000001584">
    <property type="component" value="Chromosome"/>
</dbReference>
<dbReference type="GO" id="GO:0005576">
    <property type="term" value="C:extracellular region"/>
    <property type="evidence" value="ECO:0007669"/>
    <property type="project" value="UniProtKB-SubCell"/>
</dbReference>
<dbReference type="GO" id="GO:0016020">
    <property type="term" value="C:membrane"/>
    <property type="evidence" value="ECO:0000318"/>
    <property type="project" value="GO_Central"/>
</dbReference>
<dbReference type="GO" id="GO:0009274">
    <property type="term" value="C:peptidoglycan-based cell wall"/>
    <property type="evidence" value="ECO:0007005"/>
    <property type="project" value="MTBBASE"/>
</dbReference>
<dbReference type="GO" id="GO:0005886">
    <property type="term" value="C:plasma membrane"/>
    <property type="evidence" value="ECO:0007005"/>
    <property type="project" value="MTBBASE"/>
</dbReference>
<dbReference type="GO" id="GO:0016298">
    <property type="term" value="F:lipase activity"/>
    <property type="evidence" value="ECO:0000318"/>
    <property type="project" value="GO_Central"/>
</dbReference>
<dbReference type="GO" id="GO:0047372">
    <property type="term" value="F:monoacylglycerol lipase activity"/>
    <property type="evidence" value="ECO:0000314"/>
    <property type="project" value="MTBBASE"/>
</dbReference>
<dbReference type="GO" id="GO:0046503">
    <property type="term" value="P:glycerolipid catabolic process"/>
    <property type="evidence" value="ECO:0000314"/>
    <property type="project" value="MTBBASE"/>
</dbReference>
<dbReference type="GO" id="GO:0052151">
    <property type="term" value="P:symbiont-mediated activation of host apoptosis"/>
    <property type="evidence" value="ECO:0000314"/>
    <property type="project" value="MTBBASE"/>
</dbReference>
<dbReference type="FunFam" id="3.40.50.1820:FF:000117">
    <property type="entry name" value="Monoglyceride lipase, putative"/>
    <property type="match status" value="1"/>
</dbReference>
<dbReference type="Gene3D" id="3.40.50.1820">
    <property type="entry name" value="alpha/beta hydrolase"/>
    <property type="match status" value="1"/>
</dbReference>
<dbReference type="InterPro" id="IPR000073">
    <property type="entry name" value="AB_hydrolase_1"/>
</dbReference>
<dbReference type="InterPro" id="IPR029058">
    <property type="entry name" value="AB_hydrolase_fold"/>
</dbReference>
<dbReference type="InterPro" id="IPR022742">
    <property type="entry name" value="Hydrolase_4"/>
</dbReference>
<dbReference type="InterPro" id="IPR051044">
    <property type="entry name" value="MAG_DAG_Lipase"/>
</dbReference>
<dbReference type="PANTHER" id="PTHR11614">
    <property type="entry name" value="PHOSPHOLIPASE-RELATED"/>
    <property type="match status" value="1"/>
</dbReference>
<dbReference type="Pfam" id="PF12146">
    <property type="entry name" value="Hydrolase_4"/>
    <property type="match status" value="1"/>
</dbReference>
<dbReference type="PRINTS" id="PR00111">
    <property type="entry name" value="ABHYDROLASE"/>
</dbReference>
<dbReference type="SUPFAM" id="SSF53474">
    <property type="entry name" value="alpha/beta-Hydrolases"/>
    <property type="match status" value="1"/>
</dbReference>